<proteinExistence type="inferred from homology"/>
<feature type="chain" id="PRO_1000097350" description="Peptide deformylase">
    <location>
        <begin position="1"/>
        <end position="203"/>
    </location>
</feature>
<feature type="active site" evidence="1">
    <location>
        <position position="174"/>
    </location>
</feature>
<feature type="binding site" evidence="1">
    <location>
        <position position="130"/>
    </location>
    <ligand>
        <name>Fe cation</name>
        <dbReference type="ChEBI" id="CHEBI:24875"/>
    </ligand>
</feature>
<feature type="binding site" evidence="1">
    <location>
        <position position="173"/>
    </location>
    <ligand>
        <name>Fe cation</name>
        <dbReference type="ChEBI" id="CHEBI:24875"/>
    </ligand>
</feature>
<feature type="binding site" evidence="1">
    <location>
        <position position="177"/>
    </location>
    <ligand>
        <name>Fe cation</name>
        <dbReference type="ChEBI" id="CHEBI:24875"/>
    </ligand>
</feature>
<accession>B2IQS1</accession>
<name>DEF_STRPS</name>
<evidence type="ECO:0000255" key="1">
    <source>
        <dbReference type="HAMAP-Rule" id="MF_00163"/>
    </source>
</evidence>
<gene>
    <name evidence="1" type="primary">def</name>
    <name type="ordered locus">SPCG_1443</name>
</gene>
<reference key="1">
    <citation type="journal article" date="2009" name="BMC Genomics">
        <title>Genome evolution driven by host adaptations results in a more virulent and antimicrobial-resistant Streptococcus pneumoniae serotype 14.</title>
        <authorList>
            <person name="Ding F."/>
            <person name="Tang P."/>
            <person name="Hsu M.-H."/>
            <person name="Cui P."/>
            <person name="Hu S."/>
            <person name="Yu J."/>
            <person name="Chiu C.-H."/>
        </authorList>
    </citation>
    <scope>NUCLEOTIDE SEQUENCE [LARGE SCALE GENOMIC DNA]</scope>
    <source>
        <strain>CGSP14</strain>
    </source>
</reference>
<protein>
    <recommendedName>
        <fullName evidence="1">Peptide deformylase</fullName>
        <shortName evidence="1">PDF</shortName>
        <ecNumber evidence="1">3.5.1.88</ecNumber>
    </recommendedName>
    <alternativeName>
        <fullName evidence="1">Polypeptide deformylase</fullName>
    </alternativeName>
</protein>
<dbReference type="EC" id="3.5.1.88" evidence="1"/>
<dbReference type="EMBL" id="CP001033">
    <property type="protein sequence ID" value="ACB90695.1"/>
    <property type="molecule type" value="Genomic_DNA"/>
</dbReference>
<dbReference type="RefSeq" id="WP_001272961.1">
    <property type="nucleotide sequence ID" value="NC_010582.1"/>
</dbReference>
<dbReference type="SMR" id="B2IQS1"/>
<dbReference type="GeneID" id="45218269"/>
<dbReference type="KEGG" id="spw:SPCG_1443"/>
<dbReference type="HOGENOM" id="CLU_061901_4_0_9"/>
<dbReference type="GO" id="GO:0046872">
    <property type="term" value="F:metal ion binding"/>
    <property type="evidence" value="ECO:0007669"/>
    <property type="project" value="UniProtKB-KW"/>
</dbReference>
<dbReference type="GO" id="GO:0042586">
    <property type="term" value="F:peptide deformylase activity"/>
    <property type="evidence" value="ECO:0007669"/>
    <property type="project" value="UniProtKB-UniRule"/>
</dbReference>
<dbReference type="GO" id="GO:0043686">
    <property type="term" value="P:co-translational protein modification"/>
    <property type="evidence" value="ECO:0007669"/>
    <property type="project" value="TreeGrafter"/>
</dbReference>
<dbReference type="GO" id="GO:0006412">
    <property type="term" value="P:translation"/>
    <property type="evidence" value="ECO:0007669"/>
    <property type="project" value="UniProtKB-UniRule"/>
</dbReference>
<dbReference type="CDD" id="cd00487">
    <property type="entry name" value="Pep_deformylase"/>
    <property type="match status" value="1"/>
</dbReference>
<dbReference type="FunFam" id="3.90.45.10:FF:000002">
    <property type="entry name" value="Peptide deformylase"/>
    <property type="match status" value="1"/>
</dbReference>
<dbReference type="Gene3D" id="3.90.45.10">
    <property type="entry name" value="Peptide deformylase"/>
    <property type="match status" value="1"/>
</dbReference>
<dbReference type="HAMAP" id="MF_00163">
    <property type="entry name" value="Pep_deformylase"/>
    <property type="match status" value="1"/>
</dbReference>
<dbReference type="InterPro" id="IPR023635">
    <property type="entry name" value="Peptide_deformylase"/>
</dbReference>
<dbReference type="InterPro" id="IPR036821">
    <property type="entry name" value="Peptide_deformylase_sf"/>
</dbReference>
<dbReference type="NCBIfam" id="TIGR00079">
    <property type="entry name" value="pept_deformyl"/>
    <property type="match status" value="1"/>
</dbReference>
<dbReference type="PANTHER" id="PTHR10458">
    <property type="entry name" value="PEPTIDE DEFORMYLASE"/>
    <property type="match status" value="1"/>
</dbReference>
<dbReference type="PANTHER" id="PTHR10458:SF8">
    <property type="entry name" value="PEPTIDE DEFORMYLASE 2"/>
    <property type="match status" value="1"/>
</dbReference>
<dbReference type="Pfam" id="PF01327">
    <property type="entry name" value="Pep_deformylase"/>
    <property type="match status" value="1"/>
</dbReference>
<dbReference type="PIRSF" id="PIRSF004749">
    <property type="entry name" value="Pep_def"/>
    <property type="match status" value="1"/>
</dbReference>
<dbReference type="PRINTS" id="PR01576">
    <property type="entry name" value="PDEFORMYLASE"/>
</dbReference>
<dbReference type="SUPFAM" id="SSF56420">
    <property type="entry name" value="Peptide deformylase"/>
    <property type="match status" value="1"/>
</dbReference>
<organism>
    <name type="scientific">Streptococcus pneumoniae (strain CGSP14)</name>
    <dbReference type="NCBI Taxonomy" id="516950"/>
    <lineage>
        <taxon>Bacteria</taxon>
        <taxon>Bacillati</taxon>
        <taxon>Bacillota</taxon>
        <taxon>Bacilli</taxon>
        <taxon>Lactobacillales</taxon>
        <taxon>Streptococcaceae</taxon>
        <taxon>Streptococcus</taxon>
    </lineage>
</organism>
<keyword id="KW-0378">Hydrolase</keyword>
<keyword id="KW-0408">Iron</keyword>
<keyword id="KW-0479">Metal-binding</keyword>
<keyword id="KW-0648">Protein biosynthesis</keyword>
<comment type="function">
    <text evidence="1">Removes the formyl group from the N-terminal Met of newly synthesized proteins. Requires at least a dipeptide for an efficient rate of reaction. N-terminal L-methionine is a prerequisite for activity but the enzyme has broad specificity at other positions.</text>
</comment>
<comment type="catalytic activity">
    <reaction evidence="1">
        <text>N-terminal N-formyl-L-methionyl-[peptide] + H2O = N-terminal L-methionyl-[peptide] + formate</text>
        <dbReference type="Rhea" id="RHEA:24420"/>
        <dbReference type="Rhea" id="RHEA-COMP:10639"/>
        <dbReference type="Rhea" id="RHEA-COMP:10640"/>
        <dbReference type="ChEBI" id="CHEBI:15377"/>
        <dbReference type="ChEBI" id="CHEBI:15740"/>
        <dbReference type="ChEBI" id="CHEBI:49298"/>
        <dbReference type="ChEBI" id="CHEBI:64731"/>
        <dbReference type="EC" id="3.5.1.88"/>
    </reaction>
</comment>
<comment type="cofactor">
    <cofactor evidence="1">
        <name>Fe(2+)</name>
        <dbReference type="ChEBI" id="CHEBI:29033"/>
    </cofactor>
    <text evidence="1">Binds 1 Fe(2+) ion.</text>
</comment>
<comment type="similarity">
    <text evidence="1">Belongs to the polypeptide deformylase family.</text>
</comment>
<sequence length="203" mass="22692">MSAIERITKAAHLIDMNDIIREGNPTLRTVAEEVTFPLSDQEIILGEKMMQFLKHSQDPVMAEKMGLRGGVGLAAPQLDISKRIIAVLVPNIVEEGETPQEAYDLEAIMYNPKIVSHSVQDAALGEGEGCLSVDRNVPGYVVRHARVTVDYFDKDGEKHRIKLKGYNSIVVQHEIDHINGIMFYDRINEKDPFAVKDGLLILE</sequence>